<protein>
    <recommendedName>
        <fullName evidence="1">Ribosomal RNA small subunit methyltransferase H</fullName>
        <ecNumber evidence="1">2.1.1.199</ecNumber>
    </recommendedName>
    <alternativeName>
        <fullName evidence="1">16S rRNA m(4)C1402 methyltransferase</fullName>
    </alternativeName>
    <alternativeName>
        <fullName evidence="1">rRNA (cytosine-N(4)-)-methyltransferase RsmH</fullName>
    </alternativeName>
</protein>
<comment type="function">
    <text evidence="1">Specifically methylates the N4 position of cytidine in position 1402 (C1402) of 16S rRNA.</text>
</comment>
<comment type="catalytic activity">
    <reaction evidence="1">
        <text>cytidine(1402) in 16S rRNA + S-adenosyl-L-methionine = N(4)-methylcytidine(1402) in 16S rRNA + S-adenosyl-L-homocysteine + H(+)</text>
        <dbReference type="Rhea" id="RHEA:42928"/>
        <dbReference type="Rhea" id="RHEA-COMP:10286"/>
        <dbReference type="Rhea" id="RHEA-COMP:10287"/>
        <dbReference type="ChEBI" id="CHEBI:15378"/>
        <dbReference type="ChEBI" id="CHEBI:57856"/>
        <dbReference type="ChEBI" id="CHEBI:59789"/>
        <dbReference type="ChEBI" id="CHEBI:74506"/>
        <dbReference type="ChEBI" id="CHEBI:82748"/>
        <dbReference type="EC" id="2.1.1.199"/>
    </reaction>
</comment>
<comment type="subcellular location">
    <subcellularLocation>
        <location evidence="1">Cytoplasm</location>
    </subcellularLocation>
</comment>
<comment type="similarity">
    <text evidence="1">Belongs to the methyltransferase superfamily. RsmH family.</text>
</comment>
<comment type="sequence caution" evidence="3">
    <conflict type="erroneous initiation">
        <sequence resource="EMBL-CDS" id="ABJ06043"/>
    </conflict>
</comment>
<feature type="chain" id="PRO_0000387080" description="Ribosomal RNA small subunit methyltransferase H">
    <location>
        <begin position="1"/>
        <end position="332"/>
    </location>
</feature>
<feature type="region of interest" description="Disordered" evidence="2">
    <location>
        <begin position="281"/>
        <end position="332"/>
    </location>
</feature>
<feature type="binding site" evidence="1">
    <location>
        <begin position="37"/>
        <end position="39"/>
    </location>
    <ligand>
        <name>S-adenosyl-L-methionine</name>
        <dbReference type="ChEBI" id="CHEBI:59789"/>
    </ligand>
</feature>
<feature type="binding site" evidence="1">
    <location>
        <position position="55"/>
    </location>
    <ligand>
        <name>S-adenosyl-L-methionine</name>
        <dbReference type="ChEBI" id="CHEBI:59789"/>
    </ligand>
</feature>
<feature type="binding site" evidence="1">
    <location>
        <position position="82"/>
    </location>
    <ligand>
        <name>S-adenosyl-L-methionine</name>
        <dbReference type="ChEBI" id="CHEBI:59789"/>
    </ligand>
</feature>
<feature type="binding site" evidence="1">
    <location>
        <position position="103"/>
    </location>
    <ligand>
        <name>S-adenosyl-L-methionine</name>
        <dbReference type="ChEBI" id="CHEBI:59789"/>
    </ligand>
</feature>
<feature type="binding site" evidence="1">
    <location>
        <position position="110"/>
    </location>
    <ligand>
        <name>S-adenosyl-L-methionine</name>
        <dbReference type="ChEBI" id="CHEBI:59789"/>
    </ligand>
</feature>
<organism>
    <name type="scientific">Rhodopseudomonas palustris (strain BisA53)</name>
    <dbReference type="NCBI Taxonomy" id="316055"/>
    <lineage>
        <taxon>Bacteria</taxon>
        <taxon>Pseudomonadati</taxon>
        <taxon>Pseudomonadota</taxon>
        <taxon>Alphaproteobacteria</taxon>
        <taxon>Hyphomicrobiales</taxon>
        <taxon>Nitrobacteraceae</taxon>
        <taxon>Rhodopseudomonas</taxon>
    </lineage>
</organism>
<keyword id="KW-0963">Cytoplasm</keyword>
<keyword id="KW-0489">Methyltransferase</keyword>
<keyword id="KW-0698">rRNA processing</keyword>
<keyword id="KW-0949">S-adenosyl-L-methionine</keyword>
<keyword id="KW-0808">Transferase</keyword>
<dbReference type="EC" id="2.1.1.199" evidence="1"/>
<dbReference type="EMBL" id="CP000463">
    <property type="protein sequence ID" value="ABJ06043.1"/>
    <property type="status" value="ALT_INIT"/>
    <property type="molecule type" value="Genomic_DNA"/>
</dbReference>
<dbReference type="SMR" id="Q07PU1"/>
<dbReference type="STRING" id="316055.RPE_2099"/>
<dbReference type="KEGG" id="rpe:RPE_2099"/>
<dbReference type="eggNOG" id="COG0275">
    <property type="taxonomic scope" value="Bacteria"/>
</dbReference>
<dbReference type="HOGENOM" id="CLU_038422_1_1_5"/>
<dbReference type="GO" id="GO:0005737">
    <property type="term" value="C:cytoplasm"/>
    <property type="evidence" value="ECO:0007669"/>
    <property type="project" value="UniProtKB-SubCell"/>
</dbReference>
<dbReference type="GO" id="GO:0071424">
    <property type="term" value="F:rRNA (cytosine-N4-)-methyltransferase activity"/>
    <property type="evidence" value="ECO:0007669"/>
    <property type="project" value="UniProtKB-UniRule"/>
</dbReference>
<dbReference type="GO" id="GO:0070475">
    <property type="term" value="P:rRNA base methylation"/>
    <property type="evidence" value="ECO:0007669"/>
    <property type="project" value="UniProtKB-UniRule"/>
</dbReference>
<dbReference type="FunFam" id="1.10.150.170:FF:000003">
    <property type="entry name" value="Ribosomal RNA small subunit methyltransferase H"/>
    <property type="match status" value="1"/>
</dbReference>
<dbReference type="Gene3D" id="1.10.150.170">
    <property type="entry name" value="Putative methyltransferase TM0872, insert domain"/>
    <property type="match status" value="1"/>
</dbReference>
<dbReference type="Gene3D" id="3.40.50.150">
    <property type="entry name" value="Vaccinia Virus protein VP39"/>
    <property type="match status" value="1"/>
</dbReference>
<dbReference type="HAMAP" id="MF_01007">
    <property type="entry name" value="16SrRNA_methyltr_H"/>
    <property type="match status" value="1"/>
</dbReference>
<dbReference type="InterPro" id="IPR002903">
    <property type="entry name" value="RsmH"/>
</dbReference>
<dbReference type="InterPro" id="IPR023397">
    <property type="entry name" value="SAM-dep_MeTrfase_MraW_recog"/>
</dbReference>
<dbReference type="InterPro" id="IPR029063">
    <property type="entry name" value="SAM-dependent_MTases_sf"/>
</dbReference>
<dbReference type="NCBIfam" id="TIGR00006">
    <property type="entry name" value="16S rRNA (cytosine(1402)-N(4))-methyltransferase RsmH"/>
    <property type="match status" value="1"/>
</dbReference>
<dbReference type="PANTHER" id="PTHR11265:SF0">
    <property type="entry name" value="12S RRNA N4-METHYLCYTIDINE METHYLTRANSFERASE"/>
    <property type="match status" value="1"/>
</dbReference>
<dbReference type="PANTHER" id="PTHR11265">
    <property type="entry name" value="S-ADENOSYL-METHYLTRANSFERASE MRAW"/>
    <property type="match status" value="1"/>
</dbReference>
<dbReference type="Pfam" id="PF01795">
    <property type="entry name" value="Methyltransf_5"/>
    <property type="match status" value="1"/>
</dbReference>
<dbReference type="PIRSF" id="PIRSF004486">
    <property type="entry name" value="MraW"/>
    <property type="match status" value="1"/>
</dbReference>
<dbReference type="SUPFAM" id="SSF81799">
    <property type="entry name" value="Putative methyltransferase TM0872, insert domain"/>
    <property type="match status" value="1"/>
</dbReference>
<dbReference type="SUPFAM" id="SSF53335">
    <property type="entry name" value="S-adenosyl-L-methionine-dependent methyltransferases"/>
    <property type="match status" value="1"/>
</dbReference>
<accession>Q07PU1</accession>
<evidence type="ECO:0000255" key="1">
    <source>
        <dbReference type="HAMAP-Rule" id="MF_01007"/>
    </source>
</evidence>
<evidence type="ECO:0000256" key="2">
    <source>
        <dbReference type="SAM" id="MobiDB-lite"/>
    </source>
</evidence>
<evidence type="ECO:0000305" key="3"/>
<name>RSMH_RHOP5</name>
<gene>
    <name evidence="1" type="primary">rsmH</name>
    <name type="synonym">mraW</name>
    <name type="ordered locus">RPE_2099</name>
</gene>
<reference key="1">
    <citation type="submission" date="2006-09" db="EMBL/GenBank/DDBJ databases">
        <title>Complete sequence of Rhodopseudomonas palustris BisA53.</title>
        <authorList>
            <consortium name="US DOE Joint Genome Institute"/>
            <person name="Copeland A."/>
            <person name="Lucas S."/>
            <person name="Lapidus A."/>
            <person name="Barry K."/>
            <person name="Detter J.C."/>
            <person name="Glavina del Rio T."/>
            <person name="Hammon N."/>
            <person name="Israni S."/>
            <person name="Dalin E."/>
            <person name="Tice H."/>
            <person name="Pitluck S."/>
            <person name="Chain P."/>
            <person name="Malfatti S."/>
            <person name="Shin M."/>
            <person name="Vergez L."/>
            <person name="Schmutz J."/>
            <person name="Larimer F."/>
            <person name="Land M."/>
            <person name="Hauser L."/>
            <person name="Pelletier D.A."/>
            <person name="Kyrpides N."/>
            <person name="Kim E."/>
            <person name="Harwood C.S."/>
            <person name="Oda Y."/>
            <person name="Richardson P."/>
        </authorList>
    </citation>
    <scope>NUCLEOTIDE SEQUENCE [LARGE SCALE GENOMIC DNA]</scope>
    <source>
        <strain>BisA53</strain>
    </source>
</reference>
<proteinExistence type="inferred from homology"/>
<sequence>MSPPESVRHISVLGREAVDWLAPRDGGVYVDATFGAGGYSRAILTIDGTRVIGIDRDRTAIAGGFDLVEQSDGRLTLVESRFSQLAEVCASQGVGQVDGVVMDVGVSSMQLDQAERGFSFRFDGPLDMRMGHDGFSAAEVIAAASEADLANIFYIFGEERHSRAVARAIVAARAETPIVTTKALADLVSKVVHSKPGEIHPATRSFQGLRIFVNAELDELHLALTAAERVLKPGGRLVVVSFHSLEDRIVKNFFAERGKASSGSRHRPEMAQQQPSFAILTKRPVTPSDEETAANPRARSAKLRAGERTAAPAQPEAPLPHWPTLASVMGRR</sequence>